<protein>
    <recommendedName>
        <fullName>Gag polyprotein</fullName>
    </recommendedName>
    <component>
        <recommendedName>
            <fullName>Matrix protein p19</fullName>
        </recommendedName>
    </component>
    <component>
        <recommendedName>
            <fullName>p2A</fullName>
        </recommendedName>
    </component>
    <component>
        <recommendedName>
            <fullName>p2B</fullName>
        </recommendedName>
    </component>
    <component>
        <recommendedName>
            <fullName>p10</fullName>
        </recommendedName>
    </component>
    <component>
        <recommendedName>
            <fullName>V-erbA oncogene</fullName>
        </recommendedName>
    </component>
</protein>
<comment type="function">
    <text evidence="6">Acts as a thyroid-hormone receptor antagonist. The v-ErbA oncogene cooperates with v-ErbB and other primarily sarcoma-inducing oncogenes in transformation of erythroblasts. It is non transforming by itself and cannot induce self-renewal of erythroblasts. Instead it blocks the residual capacity of the v-ErbB cells to differentiate terminally.</text>
</comment>
<comment type="subcellular location">
    <molecule>Matrix protein p19</molecule>
    <subcellularLocation>
        <location evidence="7">Virion</location>
    </subcellularLocation>
</comment>
<comment type="domain">
    <molecule>Gag polyprotein</molecule>
    <text evidence="7">Late-budding domains (L domains) are short sequence motifs essential for viral particle budding. They recruit proteins of the host ESCRT machinery (Endosomal Sorting Complex Required for Transport) or ESCRT-associated proteins. Gag contains one L domain: a PPXY motif which potentially interacts with the WW domain 3 of NEDD4 E3 ubiquitin ligase (Potential).</text>
</comment>
<comment type="PTM">
    <molecule>Gag polyprotein</molecule>
    <text evidence="2">Specific enzymatic cleavages in vivo yield mature proteins.</text>
</comment>
<comment type="miscellaneous">
    <text>THRA, the cellular counterpart of v-ErbA, is a thyroid hormone receptor alpha.</text>
</comment>
<comment type="miscellaneous">
    <molecule>Gag polyprotein</molecule>
    <text evidence="7">This protein is synthesized as a Gag-vErbA-vErbB polyprotein.</text>
</comment>
<comment type="similarity">
    <text evidence="7">Belongs to the nuclear hormone receptor family. NR1 subfamily.</text>
</comment>
<comment type="sequence caution" evidence="7">
    <conflict type="frameshift">
        <sequence resource="EMBL-CDS" id="AAA42393"/>
    </conflict>
</comment>
<dbReference type="EMBL" id="Y00044">
    <property type="protein sequence ID" value="CAA68260.1"/>
    <property type="molecule type" value="Genomic_DNA"/>
</dbReference>
<dbReference type="EMBL" id="K02006">
    <property type="protein sequence ID" value="AAA42393.1"/>
    <property type="status" value="ALT_FRAME"/>
    <property type="molecule type" value="Genomic_RNA"/>
</dbReference>
<dbReference type="PIR" id="A03248">
    <property type="entry name" value="TVFVVR"/>
</dbReference>
<dbReference type="SMR" id="P03373"/>
<dbReference type="BindingDB" id="P03373"/>
<dbReference type="ChEMBL" id="CHEMBL5824"/>
<dbReference type="GO" id="GO:0044423">
    <property type="term" value="C:virion component"/>
    <property type="evidence" value="ECO:0007669"/>
    <property type="project" value="UniProtKB-KW"/>
</dbReference>
<dbReference type="GO" id="GO:0005179">
    <property type="term" value="F:hormone activity"/>
    <property type="evidence" value="ECO:0007669"/>
    <property type="project" value="UniProtKB-KW"/>
</dbReference>
<dbReference type="GO" id="GO:0004879">
    <property type="term" value="F:nuclear receptor activity"/>
    <property type="evidence" value="ECO:0007669"/>
    <property type="project" value="InterPro"/>
</dbReference>
<dbReference type="GO" id="GO:0000978">
    <property type="term" value="F:RNA polymerase II cis-regulatory region sequence-specific DNA binding"/>
    <property type="evidence" value="ECO:0007669"/>
    <property type="project" value="TreeGrafter"/>
</dbReference>
<dbReference type="GO" id="GO:0008270">
    <property type="term" value="F:zinc ion binding"/>
    <property type="evidence" value="ECO:0007669"/>
    <property type="project" value="UniProtKB-KW"/>
</dbReference>
<dbReference type="GO" id="GO:0000122">
    <property type="term" value="P:negative regulation of transcription by RNA polymerase II"/>
    <property type="evidence" value="ECO:0007669"/>
    <property type="project" value="TreeGrafter"/>
</dbReference>
<dbReference type="GO" id="GO:0045944">
    <property type="term" value="P:positive regulation of transcription by RNA polymerase II"/>
    <property type="evidence" value="ECO:0007669"/>
    <property type="project" value="TreeGrafter"/>
</dbReference>
<dbReference type="GO" id="GO:0048384">
    <property type="term" value="P:retinoic acid receptor signaling pathway"/>
    <property type="evidence" value="ECO:0007669"/>
    <property type="project" value="TreeGrafter"/>
</dbReference>
<dbReference type="GO" id="GO:0002154">
    <property type="term" value="P:thyroid hormone receptor signaling pathway"/>
    <property type="evidence" value="ECO:0007669"/>
    <property type="project" value="TreeGrafter"/>
</dbReference>
<dbReference type="GO" id="GO:0016032">
    <property type="term" value="P:viral process"/>
    <property type="evidence" value="ECO:0007669"/>
    <property type="project" value="InterPro"/>
</dbReference>
<dbReference type="CDD" id="cd06961">
    <property type="entry name" value="NR_DBD_TR"/>
    <property type="match status" value="1"/>
</dbReference>
<dbReference type="CDD" id="cd06935">
    <property type="entry name" value="NR_LBD_TR"/>
    <property type="match status" value="1"/>
</dbReference>
<dbReference type="FunFam" id="1.10.565.10:FF:000006">
    <property type="entry name" value="Thyroid hormone receptor beta 2"/>
    <property type="match status" value="1"/>
</dbReference>
<dbReference type="FunFam" id="3.30.50.10:FF:000011">
    <property type="entry name" value="Thyroid hormone receptor beta isoform"/>
    <property type="match status" value="1"/>
</dbReference>
<dbReference type="Gene3D" id="3.30.50.10">
    <property type="entry name" value="Erythroid Transcription Factor GATA-1, subunit A"/>
    <property type="match status" value="1"/>
</dbReference>
<dbReference type="Gene3D" id="1.10.375.10">
    <property type="entry name" value="Human Immunodeficiency Virus Type 1 Capsid Protein"/>
    <property type="match status" value="1"/>
</dbReference>
<dbReference type="Gene3D" id="1.10.565.10">
    <property type="entry name" value="Retinoid X Receptor"/>
    <property type="match status" value="1"/>
</dbReference>
<dbReference type="InterPro" id="IPR035500">
    <property type="entry name" value="NHR-like_dom_sf"/>
</dbReference>
<dbReference type="InterPro" id="IPR000536">
    <property type="entry name" value="Nucl_hrmn_rcpt_lig-bd"/>
</dbReference>
<dbReference type="InterPro" id="IPR050234">
    <property type="entry name" value="Nuclear_hormone_rcpt_NR1"/>
</dbReference>
<dbReference type="InterPro" id="IPR001723">
    <property type="entry name" value="Nuclear_hrmn_rcpt"/>
</dbReference>
<dbReference type="InterPro" id="IPR008919">
    <property type="entry name" value="Retrov_capsid_N"/>
</dbReference>
<dbReference type="InterPro" id="IPR001728">
    <property type="entry name" value="ThyrH_rcpt"/>
</dbReference>
<dbReference type="InterPro" id="IPR001628">
    <property type="entry name" value="Znf_hrmn_rcpt"/>
</dbReference>
<dbReference type="InterPro" id="IPR013088">
    <property type="entry name" value="Znf_NHR/GATA"/>
</dbReference>
<dbReference type="PANTHER" id="PTHR24082">
    <property type="entry name" value="NUCLEAR HORMONE RECEPTOR"/>
    <property type="match status" value="1"/>
</dbReference>
<dbReference type="PANTHER" id="PTHR24082:SF42">
    <property type="entry name" value="THYROID HORMONE RECEPTOR ALPHA"/>
    <property type="match status" value="1"/>
</dbReference>
<dbReference type="Pfam" id="PF00104">
    <property type="entry name" value="Hormone_recep"/>
    <property type="match status" value="1"/>
</dbReference>
<dbReference type="Pfam" id="PF00105">
    <property type="entry name" value="zf-C4"/>
    <property type="match status" value="1"/>
</dbReference>
<dbReference type="PRINTS" id="PR00398">
    <property type="entry name" value="STRDHORMONER"/>
</dbReference>
<dbReference type="PRINTS" id="PR00047">
    <property type="entry name" value="STROIDFINGER"/>
</dbReference>
<dbReference type="PRINTS" id="PR00546">
    <property type="entry name" value="THYROIDHORMR"/>
</dbReference>
<dbReference type="SMART" id="SM00430">
    <property type="entry name" value="HOLI"/>
    <property type="match status" value="1"/>
</dbReference>
<dbReference type="SMART" id="SM00399">
    <property type="entry name" value="ZnF_C4"/>
    <property type="match status" value="1"/>
</dbReference>
<dbReference type="SUPFAM" id="SSF57716">
    <property type="entry name" value="Glucocorticoid receptor-like (DNA-binding domain)"/>
    <property type="match status" value="1"/>
</dbReference>
<dbReference type="SUPFAM" id="SSF48508">
    <property type="entry name" value="Nuclear receptor ligand-binding domain"/>
    <property type="match status" value="1"/>
</dbReference>
<dbReference type="SUPFAM" id="SSF47943">
    <property type="entry name" value="Retrovirus capsid protein, N-terminal core domain"/>
    <property type="match status" value="1"/>
</dbReference>
<dbReference type="PROSITE" id="PS51843">
    <property type="entry name" value="NR_LBD"/>
    <property type="match status" value="1"/>
</dbReference>
<dbReference type="PROSITE" id="PS00031">
    <property type="entry name" value="NUCLEAR_REC_DBD_1"/>
    <property type="match status" value="1"/>
</dbReference>
<dbReference type="PROSITE" id="PS51030">
    <property type="entry name" value="NUCLEAR_REC_DBD_2"/>
    <property type="match status" value="1"/>
</dbReference>
<keyword id="KW-0238">DNA-binding</keyword>
<keyword id="KW-0372">Hormone</keyword>
<keyword id="KW-0479">Metal-binding</keyword>
<keyword id="KW-0553">Oncogene</keyword>
<keyword id="KW-0675">Receptor</keyword>
<keyword id="KW-0678">Repressor</keyword>
<keyword id="KW-0795">Thyroid hormone</keyword>
<keyword id="KW-0804">Transcription</keyword>
<keyword id="KW-0805">Transcription regulation</keyword>
<keyword id="KW-0946">Virion</keyword>
<keyword id="KW-0862">Zinc</keyword>
<keyword id="KW-0863">Zinc-finger</keyword>
<name>GAG_AVIER</name>
<gene>
    <name type="primary">gag</name>
</gene>
<sequence length="555" mass="61661">REEQVTSEQAKFWLGLGGGRVSPPGPECIEKPATERRIDKGEEMGETTVQRDAKMAPEKMATPKTVGTSCYQCGTATGCNCVTASAPPPPYVGSGLYPSLAGAGEQGQGGDTPRGAEQPRAEPGHAGQAPGPALTDWARIREELASTGPPVVAMPVVIKTEGPAWTPLEPEDTRWLDGKHKRKSSQCLVKSSMSGYIPSCLDKDEQCVVCGDKATGYHYRCITCEGCKSFFRRTIQKNLHPTYSCTYDGCCVIDKITRNQCQLCRFKKCISVGMAMDLVLDDSKRVAKRKLIEENRERRRKEEMIKSLQHRPSPSAEEWELIHVVTEAHRSTNAQGSHWKQRRKFLLEDIGQSPMASMLDGDKVDLEAFSEFTKIITPAITRVVDFAKNLPMFSELPCEDQIILLKGCCMEIMSLRAAVRYDPESETLTLSGEMAVKREQLKNGGLGVVSDAIFDLGKSLSAFNLDDTEVALLQAVLLMSSDRTGLICVDKIEKCQESYLLAFEHYINYRKHNIPHFWSKLLMKVADLRMIGAYHASRFLHMKVECPTELSPQEV</sequence>
<reference key="1">
    <citation type="journal article" date="1987" name="EMBO J.">
        <title>A single point mutation in erbA restores the erythroid transforming potential of a mutant avian erythroblastosis virus (AEV) defective in both erbA and erbB oncogenes.</title>
        <authorList>
            <person name="Damm K."/>
            <person name="Beug H."/>
            <person name="Graf T."/>
            <person name="Vennstroem B."/>
        </authorList>
    </citation>
    <scope>NUCLEOTIDE SEQUENCE [GENOMIC DNA]</scope>
</reference>
<reference key="2">
    <citation type="journal article" date="1984" name="Science">
        <title>Sequencing the erbA gene of avian erythroblastosis virus reveals a new type of oncogene.</title>
        <authorList>
            <person name="Debuire B."/>
            <person name="Henry C."/>
            <person name="Benaissa M."/>
            <person name="Biserte G."/>
            <person name="Claverie J.-M."/>
            <person name="Saule S."/>
            <person name="Martin P."/>
            <person name="Stehelin D."/>
        </authorList>
    </citation>
    <scope>NUCLEOTIDE SEQUENCE [GENOMIC DNA] OF 114-551</scope>
</reference>
<reference key="3">
    <citation type="journal article" date="1989" name="Nature">
        <title>Protein encoded by v-erbA functions as a thyroid-hormone receptor antagonist.</title>
        <authorList>
            <person name="Damm K."/>
            <person name="Thompson C.C."/>
            <person name="Evans R.M."/>
        </authorList>
    </citation>
    <scope>FUNCTION</scope>
</reference>
<accession>P03373</accession>
<accession>Q85511</accession>
<proteinExistence type="inferred from homology"/>
<feature type="chain" id="PRO_0000442133" description="Gag polyprotein">
    <location>
        <begin position="1" status="less than"/>
        <end position="555"/>
    </location>
</feature>
<feature type="chain" id="PRO_0000289147" description="Matrix protein p19" evidence="1">
    <location>
        <begin position="1" status="less than"/>
        <end position="71"/>
    </location>
</feature>
<feature type="chain" id="PRO_0000289148" description="p2A" evidence="1">
    <location>
        <begin position="72"/>
        <end position="80"/>
    </location>
</feature>
<feature type="chain" id="PRO_0000289149" description="p2B" evidence="1">
    <location>
        <begin position="81"/>
        <end position="93"/>
    </location>
</feature>
<feature type="chain" id="PRO_0000289150" description="p10" evidence="1">
    <location>
        <begin position="94"/>
        <end position="154"/>
    </location>
</feature>
<feature type="chain" id="PRO_0000053445" description="V-erbA oncogene">
    <location>
        <begin position="155"/>
        <end position="555"/>
    </location>
</feature>
<feature type="domain" description="NR LBD" evidence="4">
    <location>
        <begin position="317"/>
        <end position="555"/>
    </location>
</feature>
<feature type="zinc finger region" description="NR C4-type" evidence="3">
    <location>
        <begin position="37"/>
        <end position="57"/>
    </location>
</feature>
<feature type="zinc finger region" description="NR C4-type" evidence="3">
    <location>
        <begin position="75"/>
        <end position="99"/>
    </location>
</feature>
<feature type="DNA-binding region" description="Nuclear receptor" evidence="3">
    <location>
        <begin position="204"/>
        <end position="281"/>
    </location>
</feature>
<feature type="region of interest" description="Disordered" evidence="5">
    <location>
        <begin position="14"/>
        <end position="60"/>
    </location>
</feature>
<feature type="region of interest" description="Disordered" evidence="5">
    <location>
        <begin position="95"/>
        <end position="132"/>
    </location>
</feature>
<feature type="short sequence motif" description="PPXY motif" evidence="2">
    <location>
        <begin position="88"/>
        <end position="91"/>
    </location>
</feature>
<feature type="compositionally biased region" description="Basic and acidic residues" evidence="5">
    <location>
        <begin position="28"/>
        <end position="57"/>
    </location>
</feature>
<feature type="non-terminal residue">
    <location>
        <position position="1"/>
    </location>
</feature>
<organismHost>
    <name type="scientific">Galliformes</name>
    <dbReference type="NCBI Taxonomy" id="8976"/>
</organismHost>
<organism>
    <name type="scientific">Avian erythroblastosis virus (strain ES4)</name>
    <dbReference type="NCBI Taxonomy" id="79685"/>
    <lineage>
        <taxon>Viruses</taxon>
        <taxon>Riboviria</taxon>
        <taxon>Pararnavirae</taxon>
        <taxon>Artverviricota</taxon>
        <taxon>Revtraviricetes</taxon>
        <taxon>Ortervirales</taxon>
        <taxon>Retroviridae</taxon>
        <taxon>Orthoretrovirinae</taxon>
        <taxon>Alpharetrovirus</taxon>
        <taxon>Avian leukosis virus</taxon>
    </lineage>
</organism>
<evidence type="ECO:0000250" key="1"/>
<evidence type="ECO:0000250" key="2">
    <source>
        <dbReference type="UniProtKB" id="P03322"/>
    </source>
</evidence>
<evidence type="ECO:0000255" key="3">
    <source>
        <dbReference type="PROSITE-ProRule" id="PRU00407"/>
    </source>
</evidence>
<evidence type="ECO:0000255" key="4">
    <source>
        <dbReference type="PROSITE-ProRule" id="PRU01189"/>
    </source>
</evidence>
<evidence type="ECO:0000256" key="5">
    <source>
        <dbReference type="SAM" id="MobiDB-lite"/>
    </source>
</evidence>
<evidence type="ECO:0000269" key="6">
    <source>
    </source>
</evidence>
<evidence type="ECO:0000305" key="7"/>